<reference key="1">
    <citation type="submission" date="2007-06" db="EMBL/GenBank/DDBJ databases">
        <title>Complete sequence of Marinomonas sp. MWYL1.</title>
        <authorList>
            <consortium name="US DOE Joint Genome Institute"/>
            <person name="Copeland A."/>
            <person name="Lucas S."/>
            <person name="Lapidus A."/>
            <person name="Barry K."/>
            <person name="Glavina del Rio T."/>
            <person name="Dalin E."/>
            <person name="Tice H."/>
            <person name="Pitluck S."/>
            <person name="Kiss H."/>
            <person name="Brettin T."/>
            <person name="Bruce D."/>
            <person name="Detter J.C."/>
            <person name="Han C."/>
            <person name="Schmutz J."/>
            <person name="Larimer F."/>
            <person name="Land M."/>
            <person name="Hauser L."/>
            <person name="Kyrpides N."/>
            <person name="Kim E."/>
            <person name="Johnston A.W.B."/>
            <person name="Todd J.D."/>
            <person name="Rogers R."/>
            <person name="Wexler M."/>
            <person name="Bond P.L."/>
            <person name="Li Y."/>
            <person name="Richardson P."/>
        </authorList>
    </citation>
    <scope>NUCLEOTIDE SEQUENCE [LARGE SCALE GENOMIC DNA]</scope>
    <source>
        <strain>MWYL1</strain>
    </source>
</reference>
<feature type="chain" id="PRO_1000088255" description="Membrane protein insertase YidC">
    <location>
        <begin position="1"/>
        <end position="551"/>
    </location>
</feature>
<feature type="transmembrane region" description="Helical" evidence="1">
    <location>
        <begin position="6"/>
        <end position="26"/>
    </location>
</feature>
<feature type="transmembrane region" description="Helical" evidence="1">
    <location>
        <begin position="340"/>
        <end position="360"/>
    </location>
</feature>
<feature type="transmembrane region" description="Helical" evidence="1">
    <location>
        <begin position="363"/>
        <end position="383"/>
    </location>
</feature>
<feature type="transmembrane region" description="Helical" evidence="1">
    <location>
        <begin position="433"/>
        <end position="453"/>
    </location>
</feature>
<feature type="transmembrane region" description="Helical" evidence="1">
    <location>
        <begin position="464"/>
        <end position="484"/>
    </location>
</feature>
<feature type="transmembrane region" description="Helical" evidence="1">
    <location>
        <begin position="509"/>
        <end position="529"/>
    </location>
</feature>
<feature type="region of interest" description="Disordered" evidence="2">
    <location>
        <begin position="34"/>
        <end position="68"/>
    </location>
</feature>
<feature type="compositionally biased region" description="Low complexity" evidence="2">
    <location>
        <begin position="34"/>
        <end position="50"/>
    </location>
</feature>
<feature type="compositionally biased region" description="Polar residues" evidence="2">
    <location>
        <begin position="56"/>
        <end position="68"/>
    </location>
</feature>
<organism>
    <name type="scientific">Marinomonas sp. (strain MWYL1)</name>
    <dbReference type="NCBI Taxonomy" id="400668"/>
    <lineage>
        <taxon>Bacteria</taxon>
        <taxon>Pseudomonadati</taxon>
        <taxon>Pseudomonadota</taxon>
        <taxon>Gammaproteobacteria</taxon>
        <taxon>Oceanospirillales</taxon>
        <taxon>Oceanospirillaceae</taxon>
        <taxon>Marinomonas</taxon>
    </lineage>
</organism>
<name>YIDC_MARMS</name>
<accession>A6W3V1</accession>
<dbReference type="EMBL" id="CP000749">
    <property type="protein sequence ID" value="ABR73380.1"/>
    <property type="molecule type" value="Genomic_DNA"/>
</dbReference>
<dbReference type="SMR" id="A6W3V1"/>
<dbReference type="STRING" id="400668.Mmwyl1_4485"/>
<dbReference type="KEGG" id="mmw:Mmwyl1_4485"/>
<dbReference type="eggNOG" id="COG0706">
    <property type="taxonomic scope" value="Bacteria"/>
</dbReference>
<dbReference type="HOGENOM" id="CLU_016535_3_0_6"/>
<dbReference type="OrthoDB" id="9780552at2"/>
<dbReference type="GO" id="GO:0005886">
    <property type="term" value="C:plasma membrane"/>
    <property type="evidence" value="ECO:0007669"/>
    <property type="project" value="UniProtKB-SubCell"/>
</dbReference>
<dbReference type="GO" id="GO:0032977">
    <property type="term" value="F:membrane insertase activity"/>
    <property type="evidence" value="ECO:0007669"/>
    <property type="project" value="InterPro"/>
</dbReference>
<dbReference type="GO" id="GO:0051205">
    <property type="term" value="P:protein insertion into membrane"/>
    <property type="evidence" value="ECO:0007669"/>
    <property type="project" value="TreeGrafter"/>
</dbReference>
<dbReference type="GO" id="GO:0015031">
    <property type="term" value="P:protein transport"/>
    <property type="evidence" value="ECO:0007669"/>
    <property type="project" value="UniProtKB-KW"/>
</dbReference>
<dbReference type="CDD" id="cd20070">
    <property type="entry name" value="5TM_YidC_Alb3"/>
    <property type="match status" value="1"/>
</dbReference>
<dbReference type="CDD" id="cd19961">
    <property type="entry name" value="EcYidC-like_peri"/>
    <property type="match status" value="1"/>
</dbReference>
<dbReference type="Gene3D" id="2.70.98.90">
    <property type="match status" value="1"/>
</dbReference>
<dbReference type="HAMAP" id="MF_01810">
    <property type="entry name" value="YidC_type1"/>
    <property type="match status" value="1"/>
</dbReference>
<dbReference type="InterPro" id="IPR019998">
    <property type="entry name" value="Membr_insert_YidC"/>
</dbReference>
<dbReference type="InterPro" id="IPR028053">
    <property type="entry name" value="Membr_insert_YidC_N"/>
</dbReference>
<dbReference type="InterPro" id="IPR001708">
    <property type="entry name" value="YidC/ALB3/OXA1/COX18"/>
</dbReference>
<dbReference type="InterPro" id="IPR028055">
    <property type="entry name" value="YidC/Oxa/ALB_C"/>
</dbReference>
<dbReference type="InterPro" id="IPR047196">
    <property type="entry name" value="YidC_ALB_C"/>
</dbReference>
<dbReference type="InterPro" id="IPR038221">
    <property type="entry name" value="YidC_periplasmic_sf"/>
</dbReference>
<dbReference type="NCBIfam" id="NF002352">
    <property type="entry name" value="PRK01318.1-3"/>
    <property type="match status" value="1"/>
</dbReference>
<dbReference type="NCBIfam" id="NF002353">
    <property type="entry name" value="PRK01318.1-4"/>
    <property type="match status" value="1"/>
</dbReference>
<dbReference type="NCBIfam" id="TIGR03593">
    <property type="entry name" value="yidC_nterm"/>
    <property type="match status" value="1"/>
</dbReference>
<dbReference type="NCBIfam" id="TIGR03592">
    <property type="entry name" value="yidC_oxa1_cterm"/>
    <property type="match status" value="1"/>
</dbReference>
<dbReference type="PANTHER" id="PTHR12428:SF65">
    <property type="entry name" value="CYTOCHROME C OXIDASE ASSEMBLY PROTEIN COX18, MITOCHONDRIAL"/>
    <property type="match status" value="1"/>
</dbReference>
<dbReference type="PANTHER" id="PTHR12428">
    <property type="entry name" value="OXA1"/>
    <property type="match status" value="1"/>
</dbReference>
<dbReference type="Pfam" id="PF02096">
    <property type="entry name" value="60KD_IMP"/>
    <property type="match status" value="1"/>
</dbReference>
<dbReference type="Pfam" id="PF14849">
    <property type="entry name" value="YidC_periplas"/>
    <property type="match status" value="1"/>
</dbReference>
<dbReference type="PRINTS" id="PR00701">
    <property type="entry name" value="60KDINNERMP"/>
</dbReference>
<dbReference type="PRINTS" id="PR01900">
    <property type="entry name" value="YIDCPROTEIN"/>
</dbReference>
<protein>
    <recommendedName>
        <fullName evidence="1">Membrane protein insertase YidC</fullName>
    </recommendedName>
    <alternativeName>
        <fullName evidence="1">Foldase YidC</fullName>
    </alternativeName>
    <alternativeName>
        <fullName evidence="1">Membrane integrase YidC</fullName>
    </alternativeName>
    <alternativeName>
        <fullName evidence="1">Membrane protein YidC</fullName>
    </alternativeName>
</protein>
<gene>
    <name evidence="1" type="primary">yidC</name>
    <name type="ordered locus">Mmwyl1_4485</name>
</gene>
<proteinExistence type="inferred from homology"/>
<keyword id="KW-0997">Cell inner membrane</keyword>
<keyword id="KW-1003">Cell membrane</keyword>
<keyword id="KW-0143">Chaperone</keyword>
<keyword id="KW-0472">Membrane</keyword>
<keyword id="KW-0653">Protein transport</keyword>
<keyword id="KW-0812">Transmembrane</keyword>
<keyword id="KW-1133">Transmembrane helix</keyword>
<keyword id="KW-0813">Transport</keyword>
<sequence length="551" mass="62180">MDFRRYFLWGALFISGYLLFLQWSQDYGPQSTQSVAQSTQSQSETNSQMSDDLPMATQSTTEANAEIPQSVTKIAPGKLIEVTTDTLRVAINPVGGDLVEAALLQYKKELGQPDPFVILEDGSERTYVTQSGLVGQDGPDASPEGRPVYQSEKTAYTLADGENSLDVNLYYTDAKGVKYTKTFRFMKGKYRIRQLITVDNTSSNTWRGNLFAQIKRDNTPDPSKATSMGLQPYLGGAISDEQTKYTKVSFSDMKEDPIKTTTTKGWVAVLQHYFVSAWIPEQGQKVTLQARTNGDFNIIGFTGTSVEIAPGKQGTLSSTFYVGPKLQDHLESTAENLDLTVDYGWLWWLAKPLFWLLTLIQSFVINWGIAIILIVVCVKAIFFKLSAASYRSMAKMRKFGPEIAKLKEKYGDDRQKMSQEMMALYKKEKINPLGGCLPILVQMPVFLSLYWVLMESVELRHAPFFLWIHDLSVMDPYFILPILMGISMFVQQSLNPTPPDPMQARIMKIMPVAFSIFFLWFPAGLVLYWVTNNTLSILQQYVITKRIENEA</sequence>
<evidence type="ECO:0000255" key="1">
    <source>
        <dbReference type="HAMAP-Rule" id="MF_01810"/>
    </source>
</evidence>
<evidence type="ECO:0000256" key="2">
    <source>
        <dbReference type="SAM" id="MobiDB-lite"/>
    </source>
</evidence>
<comment type="function">
    <text evidence="1">Required for the insertion and/or proper folding and/or complex formation of integral membrane proteins into the membrane. Involved in integration of membrane proteins that insert both dependently and independently of the Sec translocase complex, as well as at least some lipoproteins. Aids folding of multispanning membrane proteins.</text>
</comment>
<comment type="subunit">
    <text evidence="1">Interacts with the Sec translocase complex via SecD. Specifically interacts with transmembrane segments of nascent integral membrane proteins during membrane integration.</text>
</comment>
<comment type="subcellular location">
    <subcellularLocation>
        <location evidence="1">Cell inner membrane</location>
        <topology evidence="1">Multi-pass membrane protein</topology>
    </subcellularLocation>
</comment>
<comment type="similarity">
    <text evidence="1">Belongs to the OXA1/ALB3/YidC family. Type 1 subfamily.</text>
</comment>